<keyword id="KW-0002">3D-structure</keyword>
<keyword id="KW-0143">Chaperone</keyword>
<keyword id="KW-0413">Isomerase</keyword>
<keyword id="KW-0539">Nucleus</keyword>
<keyword id="KW-0597">Phosphoprotein</keyword>
<keyword id="KW-1185">Reference proteome</keyword>
<keyword id="KW-0697">Rotamase</keyword>
<dbReference type="EC" id="5.2.1.8" evidence="7 8"/>
<dbReference type="EMBL" id="U22382">
    <property type="protein sequence ID" value="AAB67528.1"/>
    <property type="molecule type" value="Genomic_DNA"/>
</dbReference>
<dbReference type="EMBL" id="BK006945">
    <property type="protein sequence ID" value="DAA09749.1"/>
    <property type="molecule type" value="Genomic_DNA"/>
</dbReference>
<dbReference type="PIR" id="S55971">
    <property type="entry name" value="S55971"/>
</dbReference>
<dbReference type="RefSeq" id="NP_013554.3">
    <property type="nucleotide sequence ID" value="NM_001182337.3"/>
</dbReference>
<dbReference type="PDB" id="4BF8">
    <property type="method" value="NMR"/>
    <property type="chains" value="A=280-392"/>
</dbReference>
<dbReference type="PDBsum" id="4BF8"/>
<dbReference type="BMRB" id="Q06205"/>
<dbReference type="SMR" id="Q06205"/>
<dbReference type="BioGRID" id="31707">
    <property type="interactions" value="191"/>
</dbReference>
<dbReference type="DIP" id="DIP-909N"/>
<dbReference type="FunCoup" id="Q06205">
    <property type="interactions" value="656"/>
</dbReference>
<dbReference type="IntAct" id="Q06205">
    <property type="interactions" value="123"/>
</dbReference>
<dbReference type="MINT" id="Q06205"/>
<dbReference type="STRING" id="4932.YLR449W"/>
<dbReference type="GlyGen" id="Q06205">
    <property type="glycosylation" value="1 site"/>
</dbReference>
<dbReference type="iPTMnet" id="Q06205"/>
<dbReference type="PaxDb" id="4932-YLR449W"/>
<dbReference type="PeptideAtlas" id="Q06205"/>
<dbReference type="EnsemblFungi" id="YLR449W_mRNA">
    <property type="protein sequence ID" value="YLR449W"/>
    <property type="gene ID" value="YLR449W"/>
</dbReference>
<dbReference type="GeneID" id="851170"/>
<dbReference type="KEGG" id="sce:YLR449W"/>
<dbReference type="AGR" id="SGD:S000004441"/>
<dbReference type="SGD" id="S000004441">
    <property type="gene designation" value="FPR4"/>
</dbReference>
<dbReference type="VEuPathDB" id="FungiDB:YLR449W"/>
<dbReference type="eggNOG" id="KOG0552">
    <property type="taxonomic scope" value="Eukaryota"/>
</dbReference>
<dbReference type="GeneTree" id="ENSGT00940000176659"/>
<dbReference type="HOGENOM" id="CLU_022297_3_1_1"/>
<dbReference type="InParanoid" id="Q06205"/>
<dbReference type="OMA" id="TLVKIHY"/>
<dbReference type="OrthoDB" id="77911at2759"/>
<dbReference type="BioCyc" id="YEAST:YLR449W-MONOMER"/>
<dbReference type="BioGRID-ORCS" id="851170">
    <property type="hits" value="0 hits in 10 CRISPR screens"/>
</dbReference>
<dbReference type="CD-CODE" id="E03F929F">
    <property type="entry name" value="Stress granule"/>
</dbReference>
<dbReference type="EvolutionaryTrace" id="Q06205"/>
<dbReference type="PRO" id="PR:Q06205"/>
<dbReference type="Proteomes" id="UP000002311">
    <property type="component" value="Chromosome XII"/>
</dbReference>
<dbReference type="RNAct" id="Q06205">
    <property type="molecule type" value="protein"/>
</dbReference>
<dbReference type="GO" id="GO:0000785">
    <property type="term" value="C:chromatin"/>
    <property type="evidence" value="ECO:0000314"/>
    <property type="project" value="SGD"/>
</dbReference>
<dbReference type="GO" id="GO:0005730">
    <property type="term" value="C:nucleolus"/>
    <property type="evidence" value="ECO:0007005"/>
    <property type="project" value="SGD"/>
</dbReference>
<dbReference type="GO" id="GO:0005634">
    <property type="term" value="C:nucleus"/>
    <property type="evidence" value="ECO:0000314"/>
    <property type="project" value="SGD"/>
</dbReference>
<dbReference type="GO" id="GO:0005527">
    <property type="term" value="F:macrolide binding"/>
    <property type="evidence" value="ECO:0000314"/>
    <property type="project" value="SGD"/>
</dbReference>
<dbReference type="GO" id="GO:0003755">
    <property type="term" value="F:peptidyl-prolyl cis-trans isomerase activity"/>
    <property type="evidence" value="ECO:0000314"/>
    <property type="project" value="SGD"/>
</dbReference>
<dbReference type="GO" id="GO:0040029">
    <property type="term" value="P:epigenetic regulation of gene expression"/>
    <property type="evidence" value="ECO:0000314"/>
    <property type="project" value="GO_Central"/>
</dbReference>
<dbReference type="GO" id="GO:0043007">
    <property type="term" value="P:maintenance of rDNA"/>
    <property type="evidence" value="ECO:0000315"/>
    <property type="project" value="SGD"/>
</dbReference>
<dbReference type="GO" id="GO:0006334">
    <property type="term" value="P:nucleosome assembly"/>
    <property type="evidence" value="ECO:0000314"/>
    <property type="project" value="SGD"/>
</dbReference>
<dbReference type="FunFam" id="3.10.50.40:FF:000041">
    <property type="entry name" value="FK506-binding nuclear protein"/>
    <property type="match status" value="1"/>
</dbReference>
<dbReference type="Gene3D" id="3.10.50.40">
    <property type="match status" value="1"/>
</dbReference>
<dbReference type="Gene3D" id="2.60.120.340">
    <property type="entry name" value="Nucleoplasmin core domain"/>
    <property type="match status" value="1"/>
</dbReference>
<dbReference type="InterPro" id="IPR041232">
    <property type="entry name" value="NPL"/>
</dbReference>
<dbReference type="InterPro" id="IPR046357">
    <property type="entry name" value="PPIase_dom_sf"/>
</dbReference>
<dbReference type="InterPro" id="IPR001179">
    <property type="entry name" value="PPIase_FKBP_dom"/>
</dbReference>
<dbReference type="InterPro" id="IPR023566">
    <property type="entry name" value="PPIase_Fpr3/Fpr4-like"/>
</dbReference>
<dbReference type="PANTHER" id="PTHR43811:SF19">
    <property type="entry name" value="39 KDA FK506-BINDING NUCLEAR PROTEIN"/>
    <property type="match status" value="1"/>
</dbReference>
<dbReference type="PANTHER" id="PTHR43811">
    <property type="entry name" value="FKBP-TYPE PEPTIDYL-PROLYL CIS-TRANS ISOMERASE FKPA"/>
    <property type="match status" value="1"/>
</dbReference>
<dbReference type="Pfam" id="PF00254">
    <property type="entry name" value="FKBP_C"/>
    <property type="match status" value="1"/>
</dbReference>
<dbReference type="Pfam" id="PF17800">
    <property type="entry name" value="NPL"/>
    <property type="match status" value="1"/>
</dbReference>
<dbReference type="PIRSF" id="PIRSF001473">
    <property type="entry name" value="FK506-bp_FPR3"/>
    <property type="match status" value="1"/>
</dbReference>
<dbReference type="SUPFAM" id="SSF54534">
    <property type="entry name" value="FKBP-like"/>
    <property type="match status" value="1"/>
</dbReference>
<dbReference type="PROSITE" id="PS50059">
    <property type="entry name" value="FKBP_PPIASE"/>
    <property type="match status" value="1"/>
</dbReference>
<organism>
    <name type="scientific">Saccharomyces cerevisiae (strain ATCC 204508 / S288c)</name>
    <name type="common">Baker's yeast</name>
    <dbReference type="NCBI Taxonomy" id="559292"/>
    <lineage>
        <taxon>Eukaryota</taxon>
        <taxon>Fungi</taxon>
        <taxon>Dikarya</taxon>
        <taxon>Ascomycota</taxon>
        <taxon>Saccharomycotina</taxon>
        <taxon>Saccharomycetes</taxon>
        <taxon>Saccharomycetales</taxon>
        <taxon>Saccharomycetaceae</taxon>
        <taxon>Saccharomyces</taxon>
    </lineage>
</organism>
<comment type="function">
    <text evidence="4 6 7 8">PPIase that acts as a histone chaperone (PubMed:14981505, PubMed:16846601). Histone proline isomerase that increases the rate of cis-trans isomerization at 'Pro-17' (H3P16), 'Pro-31' (H3P30) and 'Pro-39 (H3P38) on the histone H3 N-terminal tail (PubMed:16959570, PubMed:23888048). H3P16 and H3P30 are the major proline targets with little activity shown against H3P38 (PubMed:23888048). H3P38 isomerization influences SET2-mediated H3K36 methylation thereby regulating gene expression (PubMed:16959570).</text>
</comment>
<comment type="catalytic activity">
    <reaction evidence="7 8">
        <text>[protein]-peptidylproline (omega=180) = [protein]-peptidylproline (omega=0)</text>
        <dbReference type="Rhea" id="RHEA:16237"/>
        <dbReference type="Rhea" id="RHEA-COMP:10747"/>
        <dbReference type="Rhea" id="RHEA-COMP:10748"/>
        <dbReference type="ChEBI" id="CHEBI:83833"/>
        <dbReference type="ChEBI" id="CHEBI:83834"/>
        <dbReference type="EC" id="5.2.1.8"/>
    </reaction>
</comment>
<comment type="subunit">
    <text evidence="5 7">Binds to histones H3 and H4 (PubMed:16959570). Interacts with NOP53.</text>
</comment>
<comment type="interaction">
    <interactant intactId="EBI-6956">
        <id>Q06205</id>
    </interactant>
    <interactant intactId="EBI-6289">
        <id>P36049</id>
        <label>EBP2</label>
    </interactant>
    <organismsDiffer>false</organismsDiffer>
    <experiments>3</experiments>
</comment>
<comment type="interaction">
    <interactant intactId="EBI-6956">
        <id>Q06205</id>
    </interactant>
    <interactant intactId="EBI-6951">
        <id>P38911</id>
        <label>FPR3</label>
    </interactant>
    <organismsDiffer>false</organismsDiffer>
    <experiments>5</experiments>
</comment>
<comment type="interaction">
    <interactant intactId="EBI-6956">
        <id>Q06205</id>
    </interactant>
    <interactant intactId="EBI-8113">
        <id>P02309</id>
        <label>HHF2</label>
    </interactant>
    <organismsDiffer>false</organismsDiffer>
    <experiments>5</experiments>
</comment>
<comment type="interaction">
    <interactant intactId="EBI-6956">
        <id>Q06205</id>
    </interactant>
    <interactant intactId="EBI-8098">
        <id>P61830</id>
        <label>HHT2</label>
    </interactant>
    <organismsDiffer>false</organismsDiffer>
    <experiments>7</experiments>
</comment>
<comment type="interaction">
    <interactant intactId="EBI-6956">
        <id>Q06205</id>
    </interactant>
    <interactant intactId="EBI-22906">
        <id>P43586</id>
        <label>LOC1</label>
    </interactant>
    <organismsDiffer>false</organismsDiffer>
    <experiments>4</experiments>
</comment>
<comment type="interaction">
    <interactant intactId="EBI-6956">
        <id>Q06205</id>
    </interactant>
    <interactant intactId="EBI-29259">
        <id>P39744</id>
        <label>NOC2</label>
    </interactant>
    <organismsDiffer>false</organismsDiffer>
    <experiments>3</experiments>
</comment>
<comment type="interaction">
    <interactant intactId="EBI-6956">
        <id>Q06205</id>
    </interactant>
    <interactant intactId="EBI-29395">
        <id>Q12080</id>
        <label>NOP53</label>
    </interactant>
    <organismsDiffer>false</organismsDiffer>
    <experiments>3</experiments>
</comment>
<comment type="interaction">
    <interactant intactId="EBI-6956">
        <id>Q06205</id>
    </interactant>
    <interactant intactId="EBI-17814">
        <id>P25582</id>
        <label>SPB1</label>
    </interactant>
    <organismsDiffer>false</organismsDiffer>
    <experiments>3</experiments>
</comment>
<comment type="subcellular location">
    <subcellularLocation>
        <location evidence="4 9">Nucleus</location>
    </subcellularLocation>
</comment>
<comment type="miscellaneous">
    <text evidence="3">Present with 14100 molecules/cell in log phase SD medium.</text>
</comment>
<comment type="similarity">
    <text evidence="12">Belongs to the FKBP-type PPIase family. FKBP3/4 subfamily.</text>
</comment>
<proteinExistence type="evidence at protein level"/>
<feature type="chain" id="PRO_0000075314" description="FK506-binding protein 4">
    <location>
        <begin position="1"/>
        <end position="392"/>
    </location>
</feature>
<feature type="domain" description="PPIase FKBP-type" evidence="1">
    <location>
        <begin position="306"/>
        <end position="392"/>
    </location>
</feature>
<feature type="region of interest" description="Disordered" evidence="2">
    <location>
        <begin position="58"/>
        <end position="116"/>
    </location>
</feature>
<feature type="region of interest" description="Disordered" evidence="2">
    <location>
        <begin position="161"/>
        <end position="284"/>
    </location>
</feature>
<feature type="compositionally biased region" description="Acidic residues" evidence="2">
    <location>
        <begin position="73"/>
        <end position="86"/>
    </location>
</feature>
<feature type="compositionally biased region" description="Acidic residues" evidence="2">
    <location>
        <begin position="104"/>
        <end position="116"/>
    </location>
</feature>
<feature type="compositionally biased region" description="Acidic residues" evidence="2">
    <location>
        <begin position="172"/>
        <end position="219"/>
    </location>
</feature>
<feature type="compositionally biased region" description="Basic and acidic residues" evidence="2">
    <location>
        <begin position="220"/>
        <end position="234"/>
    </location>
</feature>
<feature type="compositionally biased region" description="Basic and acidic residues" evidence="2">
    <location>
        <begin position="252"/>
        <end position="279"/>
    </location>
</feature>
<feature type="modified residue" description="Phosphoserine" evidence="15 16 17">
    <location>
        <position position="80"/>
    </location>
</feature>
<feature type="modified residue" description="Phosphoserine" evidence="15 16 17">
    <location>
        <position position="82"/>
    </location>
</feature>
<feature type="strand" evidence="18">
    <location>
        <begin position="282"/>
        <end position="285"/>
    </location>
</feature>
<feature type="strand" evidence="18">
    <location>
        <begin position="291"/>
        <end position="296"/>
    </location>
</feature>
<feature type="strand" evidence="18">
    <location>
        <begin position="308"/>
        <end position="317"/>
    </location>
</feature>
<feature type="strand" evidence="18">
    <location>
        <begin position="322"/>
        <end position="326"/>
    </location>
</feature>
<feature type="strand" evidence="18">
    <location>
        <begin position="332"/>
        <end position="336"/>
    </location>
</feature>
<feature type="strand" evidence="18">
    <location>
        <begin position="339"/>
        <end position="341"/>
    </location>
</feature>
<feature type="helix" evidence="18">
    <location>
        <begin position="343"/>
        <end position="348"/>
    </location>
</feature>
<feature type="strand" evidence="18">
    <location>
        <begin position="357"/>
        <end position="362"/>
    </location>
</feature>
<feature type="helix" evidence="18">
    <location>
        <begin position="364"/>
        <end position="366"/>
    </location>
</feature>
<feature type="turn" evidence="18">
    <location>
        <begin position="367"/>
        <end position="370"/>
    </location>
</feature>
<feature type="strand" evidence="18">
    <location>
        <begin position="382"/>
        <end position="392"/>
    </location>
</feature>
<evidence type="ECO:0000255" key="1">
    <source>
        <dbReference type="PROSITE-ProRule" id="PRU00277"/>
    </source>
</evidence>
<evidence type="ECO:0000256" key="2">
    <source>
        <dbReference type="SAM" id="MobiDB-lite"/>
    </source>
</evidence>
<evidence type="ECO:0000269" key="3">
    <source>
    </source>
</evidence>
<evidence type="ECO:0000269" key="4">
    <source>
    </source>
</evidence>
<evidence type="ECO:0000269" key="5">
    <source>
    </source>
</evidence>
<evidence type="ECO:0000269" key="6">
    <source>
    </source>
</evidence>
<evidence type="ECO:0000269" key="7">
    <source>
    </source>
</evidence>
<evidence type="ECO:0000269" key="8">
    <source>
    </source>
</evidence>
<evidence type="ECO:0000269" key="9">
    <source>
    </source>
</evidence>
<evidence type="ECO:0000303" key="10">
    <source>
    </source>
</evidence>
<evidence type="ECO:0000303" key="11">
    <source>
    </source>
</evidence>
<evidence type="ECO:0000305" key="12"/>
<evidence type="ECO:0000305" key="13">
    <source>
    </source>
</evidence>
<evidence type="ECO:0000312" key="14">
    <source>
        <dbReference type="SGD" id="S000004441"/>
    </source>
</evidence>
<evidence type="ECO:0007744" key="15">
    <source>
    </source>
</evidence>
<evidence type="ECO:0007744" key="16">
    <source>
    </source>
</evidence>
<evidence type="ECO:0007744" key="17">
    <source>
    </source>
</evidence>
<evidence type="ECO:0007829" key="18">
    <source>
        <dbReference type="PDB" id="4BF8"/>
    </source>
</evidence>
<reference key="1">
    <citation type="journal article" date="1997" name="Nature">
        <title>The nucleotide sequence of Saccharomyces cerevisiae chromosome XII.</title>
        <authorList>
            <person name="Johnston M."/>
            <person name="Hillier L.W."/>
            <person name="Riles L."/>
            <person name="Albermann K."/>
            <person name="Andre B."/>
            <person name="Ansorge W."/>
            <person name="Benes V."/>
            <person name="Brueckner M."/>
            <person name="Delius H."/>
            <person name="Dubois E."/>
            <person name="Duesterhoeft A."/>
            <person name="Entian K.-D."/>
            <person name="Floeth M."/>
            <person name="Goffeau A."/>
            <person name="Hebling U."/>
            <person name="Heumann K."/>
            <person name="Heuss-Neitzel D."/>
            <person name="Hilbert H."/>
            <person name="Hilger F."/>
            <person name="Kleine K."/>
            <person name="Koetter P."/>
            <person name="Louis E.J."/>
            <person name="Messenguy F."/>
            <person name="Mewes H.-W."/>
            <person name="Miosga T."/>
            <person name="Moestl D."/>
            <person name="Mueller-Auer S."/>
            <person name="Nentwich U."/>
            <person name="Obermaier B."/>
            <person name="Piravandi E."/>
            <person name="Pohl T.M."/>
            <person name="Portetelle D."/>
            <person name="Purnelle B."/>
            <person name="Rechmann S."/>
            <person name="Rieger M."/>
            <person name="Rinke M."/>
            <person name="Rose M."/>
            <person name="Scharfe M."/>
            <person name="Scherens B."/>
            <person name="Scholler P."/>
            <person name="Schwager C."/>
            <person name="Schwarz S."/>
            <person name="Underwood A.P."/>
            <person name="Urrestarazu L.A."/>
            <person name="Vandenbol M."/>
            <person name="Verhasselt P."/>
            <person name="Vierendeels F."/>
            <person name="Voet M."/>
            <person name="Volckaert G."/>
            <person name="Voss H."/>
            <person name="Wambutt R."/>
            <person name="Wedler E."/>
            <person name="Wedler H."/>
            <person name="Zimmermann F.K."/>
            <person name="Zollner A."/>
            <person name="Hani J."/>
            <person name="Hoheisel J.D."/>
        </authorList>
    </citation>
    <scope>NUCLEOTIDE SEQUENCE [LARGE SCALE GENOMIC DNA]</scope>
    <source>
        <strain>ATCC 204508 / S288c</strain>
    </source>
</reference>
<reference key="2">
    <citation type="journal article" date="2014" name="G3 (Bethesda)">
        <title>The reference genome sequence of Saccharomyces cerevisiae: Then and now.</title>
        <authorList>
            <person name="Engel S.R."/>
            <person name="Dietrich F.S."/>
            <person name="Fisk D.G."/>
            <person name="Binkley G."/>
            <person name="Balakrishnan R."/>
            <person name="Costanzo M.C."/>
            <person name="Dwight S.S."/>
            <person name="Hitz B.C."/>
            <person name="Karra K."/>
            <person name="Nash R.S."/>
            <person name="Weng S."/>
            <person name="Wong E.D."/>
            <person name="Lloyd P."/>
            <person name="Skrzypek M.S."/>
            <person name="Miyasato S.R."/>
            <person name="Simison M."/>
            <person name="Cherry J.M."/>
        </authorList>
    </citation>
    <scope>GENOME REANNOTATION</scope>
    <source>
        <strain>ATCC 204508 / S288c</strain>
    </source>
</reference>
<reference key="3">
    <citation type="journal article" date="1997" name="Proc. Natl. Acad. Sci. U.S.A.">
        <title>All cyclophilins and FK506 binding proteins are, individually and collectively, dispensable for viability in Saccharomyces cerevisiae.</title>
        <authorList>
            <person name="Dolinski K."/>
            <person name="Muir S."/>
            <person name="Cardenas M."/>
            <person name="Heitman J."/>
        </authorList>
    </citation>
    <scope>SUBCELLULAR LOCATION</scope>
</reference>
<reference key="4">
    <citation type="journal article" date="2003" name="Nature">
        <title>Global analysis of protein expression in yeast.</title>
        <authorList>
            <person name="Ghaemmaghami S."/>
            <person name="Huh W.-K."/>
            <person name="Bower K."/>
            <person name="Howson R.W."/>
            <person name="Belle A."/>
            <person name="Dephoure N."/>
            <person name="O'Shea E.K."/>
            <person name="Weissman J.S."/>
        </authorList>
    </citation>
    <scope>LEVEL OF PROTEIN EXPRESSION [LARGE SCALE ANALYSIS]</scope>
</reference>
<reference key="5">
    <citation type="journal article" date="2004" name="Nat. Struct. Mol. Biol.">
        <title>A nuclear FK506-binding protein is a histone chaperone regulating rDNA silencing.</title>
        <authorList>
            <person name="Kuzuhara T."/>
            <person name="Horikoshi M."/>
        </authorList>
    </citation>
    <scope>FUNCTION</scope>
    <scope>SUBCELLULAR LOCATION</scope>
</reference>
<reference key="6">
    <citation type="journal article" date="2005" name="Biochem. J.">
        <title>Nop53p is a novel nucleolar 60S ribosomal subunit biogenesis protein.</title>
        <authorList>
            <person name="Sydorskyy Y."/>
            <person name="Dilworth D.J."/>
            <person name="Halloran B."/>
            <person name="Yi E.C."/>
            <person name="Makhnevych T."/>
            <person name="Wozniak R.W."/>
            <person name="Aitchison J.D."/>
        </authorList>
    </citation>
    <scope>INTERACTION WITH NOP53</scope>
    <scope>IDENTIFICATION BY MASS SPECTROMETRY</scope>
</reference>
<reference key="7">
    <citation type="journal article" date="2006" name="Cell">
        <title>Proline isomerization of histone H3 regulates lysine methylation and gene expression.</title>
        <authorList>
            <person name="Nelson C.J."/>
            <person name="Santos-Rosa H."/>
            <person name="Kouzarides T."/>
        </authorList>
    </citation>
    <scope>FUNCTION</scope>
    <scope>CATALYTIC ACTIVITY</scope>
    <scope>INTERACTION WITH HISTONE H3 AND H4</scope>
</reference>
<reference key="8">
    <citation type="journal article" date="2006" name="FEBS Lett.">
        <title>The FK506-binding protein, Fpr4, is an acidic histone chaperone.</title>
        <authorList>
            <person name="Xiao H."/>
            <person name="Jackson V."/>
            <person name="Lei M."/>
        </authorList>
    </citation>
    <scope>FUNCTION</scope>
</reference>
<reference key="9">
    <citation type="journal article" date="2007" name="J. Proteome Res.">
        <title>Large-scale phosphorylation analysis of alpha-factor-arrested Saccharomyces cerevisiae.</title>
        <authorList>
            <person name="Li X."/>
            <person name="Gerber S.A."/>
            <person name="Rudner A.D."/>
            <person name="Beausoleil S.A."/>
            <person name="Haas W."/>
            <person name="Villen J."/>
            <person name="Elias J.E."/>
            <person name="Gygi S.P."/>
        </authorList>
    </citation>
    <scope>PHOSPHORYLATION [LARGE SCALE ANALYSIS] AT SER-80 AND SER-82</scope>
    <scope>IDENTIFICATION BY MASS SPECTROMETRY [LARGE SCALE ANALYSIS]</scope>
    <source>
        <strain>ADR376</strain>
    </source>
</reference>
<reference key="10">
    <citation type="journal article" date="2008" name="Mol. Cell. Proteomics">
        <title>A multidimensional chromatography technology for in-depth phosphoproteome analysis.</title>
        <authorList>
            <person name="Albuquerque C.P."/>
            <person name="Smolka M.B."/>
            <person name="Payne S.H."/>
            <person name="Bafna V."/>
            <person name="Eng J."/>
            <person name="Zhou H."/>
        </authorList>
    </citation>
    <scope>PHOSPHORYLATION [LARGE SCALE ANALYSIS] AT SER-80 AND SER-82</scope>
    <scope>IDENTIFICATION BY MASS SPECTROMETRY [LARGE SCALE ANALYSIS]</scope>
</reference>
<reference key="11">
    <citation type="journal article" date="2009" name="Science">
        <title>Global analysis of Cdk1 substrate phosphorylation sites provides insights into evolution.</title>
        <authorList>
            <person name="Holt L.J."/>
            <person name="Tuch B.B."/>
            <person name="Villen J."/>
            <person name="Johnson A.D."/>
            <person name="Gygi S.P."/>
            <person name="Morgan D.O."/>
        </authorList>
    </citation>
    <scope>PHOSPHORYLATION [LARGE SCALE ANALYSIS] AT SER-80 AND SER-82</scope>
    <scope>IDENTIFICATION BY MASS SPECTROMETRY [LARGE SCALE ANALYSIS]</scope>
</reference>
<reference key="12">
    <citation type="journal article" date="2013" name="J. Biol. Chem.">
        <title>Structure and activity of the peptidyl-prolyl isomerase domain from the histone chaperone Fpr4 toward histone H3 proline isomerization.</title>
        <authorList>
            <person name="Monneau Y.R."/>
            <person name="Soufari H."/>
            <person name="Nelson C.J."/>
            <person name="Mackereth C.D."/>
        </authorList>
    </citation>
    <scope>STRUCTURE BY NMR OF 280-392</scope>
    <scope>FUNCTION</scope>
    <scope>CATALYTIC ACTIVITY</scope>
</reference>
<accession>Q06205</accession>
<accession>D6VZ83</accession>
<name>FKBP4_YEAST</name>
<gene>
    <name evidence="11" type="primary">FPR4</name>
    <name evidence="14" type="ordered locus">YLR449W</name>
    <name type="ORF">L9324.3</name>
</gene>
<sequence>MSDMLPLATYSLNVEPYSPTPALNFKIPVTIRITMAAIDPEPFDDDKKPSTLRIIKRNPELTRGEYYNQDNNDGLEEDESESEQEADVPKRSVKSKKGKAVEQSESEDSEDENEIDDEFEECVLLTLSPKGQYQQALDITIAPEEDVQFVVTGSYTISLTGNYVKHPFDNSSDSDEDEEDYYSDEESSNGEEEEEEEEEDDEELSSGDDDLDDLVDASDIESRLDELVKKDEKKKNNKKDSKRKHEEDEEESAKPAEKKQTTKKDKKAEKVKDSEESKPKPKTKLLEGGIIIEDRVTGKGPHAKKGTRVGMRYVGKLKNGKVFDKNTKGKPFVFKLGQGEVIKGWDIGVAGMAVGGERRIVIPAPYAYGKQALPGIPANSELTFDVKLVSMK</sequence>
<protein>
    <recommendedName>
        <fullName evidence="13">FK506-binding protein 4</fullName>
        <ecNumber evidence="7 8">5.2.1.8</ecNumber>
    </recommendedName>
    <alternativeName>
        <fullName evidence="10">Histone proline isomerase</fullName>
    </alternativeName>
    <alternativeName>
        <fullName>Peptidyl-prolyl cis-trans isomerase</fullName>
        <shortName>PPIase</shortName>
    </alternativeName>
    <alternativeName>
        <fullName>Rotamase</fullName>
    </alternativeName>
</protein>